<name>NIM1_MOUSE</name>
<feature type="chain" id="PRO_0000247667" description="Serine/threonine-protein kinase NIM1">
    <location>
        <begin position="1"/>
        <end position="436"/>
    </location>
</feature>
<feature type="domain" description="Protein kinase" evidence="3">
    <location>
        <begin position="74"/>
        <end position="325"/>
    </location>
</feature>
<feature type="active site" description="Proton acceptor" evidence="1 3 4">
    <location>
        <position position="196"/>
    </location>
</feature>
<feature type="binding site" evidence="1 3">
    <location>
        <begin position="80"/>
        <end position="88"/>
    </location>
    <ligand>
        <name>ATP</name>
        <dbReference type="ChEBI" id="CHEBI:30616"/>
    </ligand>
</feature>
<feature type="binding site" evidence="1 3">
    <location>
        <position position="103"/>
    </location>
    <ligand>
        <name>ATP</name>
        <dbReference type="ChEBI" id="CHEBI:30616"/>
    </ligand>
</feature>
<feature type="modified residue" description="Phosphothreonine; by autocatalysis" evidence="2">
    <location>
        <position position="229"/>
    </location>
</feature>
<feature type="sequence conflict" description="In Ref. 1; BAC31934." evidence="5" ref="1">
    <original>S</original>
    <variation>F</variation>
    <location>
        <position position="295"/>
    </location>
</feature>
<reference evidence="8" key="1">
    <citation type="journal article" date="2005" name="Science">
        <title>The transcriptional landscape of the mammalian genome.</title>
        <authorList>
            <person name="Carninci P."/>
            <person name="Kasukawa T."/>
            <person name="Katayama S."/>
            <person name="Gough J."/>
            <person name="Frith M.C."/>
            <person name="Maeda N."/>
            <person name="Oyama R."/>
            <person name="Ravasi T."/>
            <person name="Lenhard B."/>
            <person name="Wells C."/>
            <person name="Kodzius R."/>
            <person name="Shimokawa K."/>
            <person name="Bajic V.B."/>
            <person name="Brenner S.E."/>
            <person name="Batalov S."/>
            <person name="Forrest A.R."/>
            <person name="Zavolan M."/>
            <person name="Davis M.J."/>
            <person name="Wilming L.G."/>
            <person name="Aidinis V."/>
            <person name="Allen J.E."/>
            <person name="Ambesi-Impiombato A."/>
            <person name="Apweiler R."/>
            <person name="Aturaliya R.N."/>
            <person name="Bailey T.L."/>
            <person name="Bansal M."/>
            <person name="Baxter L."/>
            <person name="Beisel K.W."/>
            <person name="Bersano T."/>
            <person name="Bono H."/>
            <person name="Chalk A.M."/>
            <person name="Chiu K.P."/>
            <person name="Choudhary V."/>
            <person name="Christoffels A."/>
            <person name="Clutterbuck D.R."/>
            <person name="Crowe M.L."/>
            <person name="Dalla E."/>
            <person name="Dalrymple B.P."/>
            <person name="de Bono B."/>
            <person name="Della Gatta G."/>
            <person name="di Bernardo D."/>
            <person name="Down T."/>
            <person name="Engstrom P."/>
            <person name="Fagiolini M."/>
            <person name="Faulkner G."/>
            <person name="Fletcher C.F."/>
            <person name="Fukushima T."/>
            <person name="Furuno M."/>
            <person name="Futaki S."/>
            <person name="Gariboldi M."/>
            <person name="Georgii-Hemming P."/>
            <person name="Gingeras T.R."/>
            <person name="Gojobori T."/>
            <person name="Green R.E."/>
            <person name="Gustincich S."/>
            <person name="Harbers M."/>
            <person name="Hayashi Y."/>
            <person name="Hensch T.K."/>
            <person name="Hirokawa N."/>
            <person name="Hill D."/>
            <person name="Huminiecki L."/>
            <person name="Iacono M."/>
            <person name="Ikeo K."/>
            <person name="Iwama A."/>
            <person name="Ishikawa T."/>
            <person name="Jakt M."/>
            <person name="Kanapin A."/>
            <person name="Katoh M."/>
            <person name="Kawasawa Y."/>
            <person name="Kelso J."/>
            <person name="Kitamura H."/>
            <person name="Kitano H."/>
            <person name="Kollias G."/>
            <person name="Krishnan S.P."/>
            <person name="Kruger A."/>
            <person name="Kummerfeld S.K."/>
            <person name="Kurochkin I.V."/>
            <person name="Lareau L.F."/>
            <person name="Lazarevic D."/>
            <person name="Lipovich L."/>
            <person name="Liu J."/>
            <person name="Liuni S."/>
            <person name="McWilliam S."/>
            <person name="Madan Babu M."/>
            <person name="Madera M."/>
            <person name="Marchionni L."/>
            <person name="Matsuda H."/>
            <person name="Matsuzawa S."/>
            <person name="Miki H."/>
            <person name="Mignone F."/>
            <person name="Miyake S."/>
            <person name="Morris K."/>
            <person name="Mottagui-Tabar S."/>
            <person name="Mulder N."/>
            <person name="Nakano N."/>
            <person name="Nakauchi H."/>
            <person name="Ng P."/>
            <person name="Nilsson R."/>
            <person name="Nishiguchi S."/>
            <person name="Nishikawa S."/>
            <person name="Nori F."/>
            <person name="Ohara O."/>
            <person name="Okazaki Y."/>
            <person name="Orlando V."/>
            <person name="Pang K.C."/>
            <person name="Pavan W.J."/>
            <person name="Pavesi G."/>
            <person name="Pesole G."/>
            <person name="Petrovsky N."/>
            <person name="Piazza S."/>
            <person name="Reed J."/>
            <person name="Reid J.F."/>
            <person name="Ring B.Z."/>
            <person name="Ringwald M."/>
            <person name="Rost B."/>
            <person name="Ruan Y."/>
            <person name="Salzberg S.L."/>
            <person name="Sandelin A."/>
            <person name="Schneider C."/>
            <person name="Schoenbach C."/>
            <person name="Sekiguchi K."/>
            <person name="Semple C.A."/>
            <person name="Seno S."/>
            <person name="Sessa L."/>
            <person name="Sheng Y."/>
            <person name="Shibata Y."/>
            <person name="Shimada H."/>
            <person name="Shimada K."/>
            <person name="Silva D."/>
            <person name="Sinclair B."/>
            <person name="Sperling S."/>
            <person name="Stupka E."/>
            <person name="Sugiura K."/>
            <person name="Sultana R."/>
            <person name="Takenaka Y."/>
            <person name="Taki K."/>
            <person name="Tammoja K."/>
            <person name="Tan S.L."/>
            <person name="Tang S."/>
            <person name="Taylor M.S."/>
            <person name="Tegner J."/>
            <person name="Teichmann S.A."/>
            <person name="Ueda H.R."/>
            <person name="van Nimwegen E."/>
            <person name="Verardo R."/>
            <person name="Wei C.L."/>
            <person name="Yagi K."/>
            <person name="Yamanishi H."/>
            <person name="Zabarovsky E."/>
            <person name="Zhu S."/>
            <person name="Zimmer A."/>
            <person name="Hide W."/>
            <person name="Bult C."/>
            <person name="Grimmond S.M."/>
            <person name="Teasdale R.D."/>
            <person name="Liu E.T."/>
            <person name="Brusic V."/>
            <person name="Quackenbush J."/>
            <person name="Wahlestedt C."/>
            <person name="Mattick J.S."/>
            <person name="Hume D.A."/>
            <person name="Kai C."/>
            <person name="Sasaki D."/>
            <person name="Tomaru Y."/>
            <person name="Fukuda S."/>
            <person name="Kanamori-Katayama M."/>
            <person name="Suzuki M."/>
            <person name="Aoki J."/>
            <person name="Arakawa T."/>
            <person name="Iida J."/>
            <person name="Imamura K."/>
            <person name="Itoh M."/>
            <person name="Kato T."/>
            <person name="Kawaji H."/>
            <person name="Kawagashira N."/>
            <person name="Kawashima T."/>
            <person name="Kojima M."/>
            <person name="Kondo S."/>
            <person name="Konno H."/>
            <person name="Nakano K."/>
            <person name="Ninomiya N."/>
            <person name="Nishio T."/>
            <person name="Okada M."/>
            <person name="Plessy C."/>
            <person name="Shibata K."/>
            <person name="Shiraki T."/>
            <person name="Suzuki S."/>
            <person name="Tagami M."/>
            <person name="Waki K."/>
            <person name="Watahiki A."/>
            <person name="Okamura-Oho Y."/>
            <person name="Suzuki H."/>
            <person name="Kawai J."/>
            <person name="Hayashizaki Y."/>
        </authorList>
    </citation>
    <scope>NUCLEOTIDE SEQUENCE [LARGE SCALE MRNA]</scope>
    <source>
        <strain evidence="8">C57BL/6J</strain>
        <tissue evidence="8">Cerebellum</tissue>
        <tissue evidence="9">Eye</tissue>
        <tissue evidence="7">Retina</tissue>
    </source>
</reference>
<reference evidence="6" key="2">
    <citation type="journal article" date="2004" name="Genome Res.">
        <title>The status, quality, and expansion of the NIH full-length cDNA project: the Mammalian Gene Collection (MGC).</title>
        <authorList>
            <consortium name="The MGC Project Team"/>
        </authorList>
    </citation>
    <scope>NUCLEOTIDE SEQUENCE [LARGE SCALE MRNA]</scope>
    <source>
        <tissue evidence="6">Eye</tissue>
    </source>
</reference>
<keyword id="KW-0067">ATP-binding</keyword>
<keyword id="KW-0418">Kinase</keyword>
<keyword id="KW-0460">Magnesium</keyword>
<keyword id="KW-0479">Metal-binding</keyword>
<keyword id="KW-0547">Nucleotide-binding</keyword>
<keyword id="KW-0597">Phosphoprotein</keyword>
<keyword id="KW-1185">Reference proteome</keyword>
<keyword id="KW-0723">Serine/threonine-protein kinase</keyword>
<keyword id="KW-0808">Transferase</keyword>
<evidence type="ECO:0000250" key="1">
    <source>
        <dbReference type="UniProtKB" id="P28523"/>
    </source>
</evidence>
<evidence type="ECO:0000250" key="2">
    <source>
        <dbReference type="UniProtKB" id="Q8IY84"/>
    </source>
</evidence>
<evidence type="ECO:0000255" key="3">
    <source>
        <dbReference type="PROSITE-ProRule" id="PRU00159"/>
    </source>
</evidence>
<evidence type="ECO:0000255" key="4">
    <source>
        <dbReference type="PROSITE-ProRule" id="PRU10027"/>
    </source>
</evidence>
<evidence type="ECO:0000305" key="5"/>
<evidence type="ECO:0000312" key="6">
    <source>
        <dbReference type="EMBL" id="AAI06123.1"/>
    </source>
</evidence>
<evidence type="ECO:0000312" key="7">
    <source>
        <dbReference type="EMBL" id="BAC31934.1"/>
    </source>
</evidence>
<evidence type="ECO:0000312" key="8">
    <source>
        <dbReference type="EMBL" id="BAC33424.1"/>
    </source>
</evidence>
<evidence type="ECO:0000312" key="9">
    <source>
        <dbReference type="EMBL" id="BAC35497.1"/>
    </source>
</evidence>
<proteinExistence type="evidence at transcript level"/>
<accession>Q8BHI9</accession>
<accession>Q148V1</accession>
<accession>Q80XC1</accession>
<accession>Q8BXQ9</accession>
<gene>
    <name type="primary">Nim1k</name>
    <name type="synonym">Nim1</name>
</gene>
<protein>
    <recommendedName>
        <fullName>Serine/threonine-protein kinase NIM1</fullName>
        <ecNumber>2.7.11.1</ecNumber>
    </recommendedName>
    <alternativeName>
        <fullName>NIM1 serine/threonine-protein kinase</fullName>
    </alternativeName>
</protein>
<comment type="catalytic activity">
    <reaction evidence="2">
        <text>L-seryl-[protein] + ATP = O-phospho-L-seryl-[protein] + ADP + H(+)</text>
        <dbReference type="Rhea" id="RHEA:17989"/>
        <dbReference type="Rhea" id="RHEA-COMP:9863"/>
        <dbReference type="Rhea" id="RHEA-COMP:11604"/>
        <dbReference type="ChEBI" id="CHEBI:15378"/>
        <dbReference type="ChEBI" id="CHEBI:29999"/>
        <dbReference type="ChEBI" id="CHEBI:30616"/>
        <dbReference type="ChEBI" id="CHEBI:83421"/>
        <dbReference type="ChEBI" id="CHEBI:456216"/>
        <dbReference type="EC" id="2.7.11.1"/>
    </reaction>
</comment>
<comment type="catalytic activity">
    <reaction evidence="2">
        <text>L-threonyl-[protein] + ATP = O-phospho-L-threonyl-[protein] + ADP + H(+)</text>
        <dbReference type="Rhea" id="RHEA:46608"/>
        <dbReference type="Rhea" id="RHEA-COMP:11060"/>
        <dbReference type="Rhea" id="RHEA-COMP:11605"/>
        <dbReference type="ChEBI" id="CHEBI:15378"/>
        <dbReference type="ChEBI" id="CHEBI:30013"/>
        <dbReference type="ChEBI" id="CHEBI:30616"/>
        <dbReference type="ChEBI" id="CHEBI:61977"/>
        <dbReference type="ChEBI" id="CHEBI:456216"/>
        <dbReference type="EC" id="2.7.11.1"/>
    </reaction>
</comment>
<comment type="cofactor">
    <cofactor evidence="2">
        <name>Mg(2+)</name>
        <dbReference type="ChEBI" id="CHEBI:18420"/>
    </cofactor>
</comment>
<comment type="activity regulation">
    <text evidence="2">Activated by phosphorylation at Thr-229, probably by autophosphorylation.</text>
</comment>
<comment type="similarity">
    <text evidence="5">Belongs to the protein kinase superfamily. CAMK Ser/Thr protein kinase family.</text>
</comment>
<dbReference type="EC" id="2.7.11.1"/>
<dbReference type="EMBL" id="AK044462">
    <property type="protein sequence ID" value="BAC31934.1"/>
    <property type="molecule type" value="mRNA"/>
</dbReference>
<dbReference type="EMBL" id="AK048694">
    <property type="protein sequence ID" value="BAC33424.1"/>
    <property type="molecule type" value="mRNA"/>
</dbReference>
<dbReference type="EMBL" id="AK053734">
    <property type="protein sequence ID" value="BAC35497.1"/>
    <property type="molecule type" value="mRNA"/>
</dbReference>
<dbReference type="EMBL" id="BC051189">
    <property type="protein sequence ID" value="AAH51189.2"/>
    <property type="molecule type" value="mRNA"/>
</dbReference>
<dbReference type="EMBL" id="BC106122">
    <property type="protein sequence ID" value="AAI06123.1"/>
    <property type="molecule type" value="mRNA"/>
</dbReference>
<dbReference type="EMBL" id="BC117955">
    <property type="protein sequence ID" value="AAI17956.1"/>
    <property type="molecule type" value="mRNA"/>
</dbReference>
<dbReference type="EMBL" id="BC117956">
    <property type="protein sequence ID" value="AAI17957.1"/>
    <property type="molecule type" value="mRNA"/>
</dbReference>
<dbReference type="CCDS" id="CCDS56902.1"/>
<dbReference type="RefSeq" id="NP_780747.1">
    <property type="nucleotide sequence ID" value="NM_175538.3"/>
</dbReference>
<dbReference type="SMR" id="Q8BHI9"/>
<dbReference type="FunCoup" id="Q8BHI9">
    <property type="interactions" value="342"/>
</dbReference>
<dbReference type="STRING" id="10090.ENSMUSP00000136377"/>
<dbReference type="GlyGen" id="Q8BHI9">
    <property type="glycosylation" value="3 sites, 1 O-linked glycan (1 site)"/>
</dbReference>
<dbReference type="iPTMnet" id="Q8BHI9"/>
<dbReference type="PhosphoSitePlus" id="Q8BHI9"/>
<dbReference type="PaxDb" id="10090-ENSMUSP00000136377"/>
<dbReference type="ProteomicsDB" id="293849"/>
<dbReference type="Antibodypedia" id="23239">
    <property type="antibodies" value="152 antibodies from 24 providers"/>
</dbReference>
<dbReference type="DNASU" id="245269"/>
<dbReference type="Ensembl" id="ENSMUST00000178142.2">
    <property type="protein sequence ID" value="ENSMUSP00000136377.2"/>
    <property type="gene ID" value="ENSMUSG00000095930.2"/>
</dbReference>
<dbReference type="GeneID" id="245269"/>
<dbReference type="KEGG" id="mmu:245269"/>
<dbReference type="UCSC" id="uc007rzu.1">
    <property type="organism name" value="mouse"/>
</dbReference>
<dbReference type="AGR" id="MGI:2442399"/>
<dbReference type="CTD" id="167359"/>
<dbReference type="MGI" id="MGI:2442399">
    <property type="gene designation" value="Nim1k"/>
</dbReference>
<dbReference type="VEuPathDB" id="HostDB:ENSMUSG00000095930"/>
<dbReference type="eggNOG" id="KOG0583">
    <property type="taxonomic scope" value="Eukaryota"/>
</dbReference>
<dbReference type="GeneTree" id="ENSGT00940000160020"/>
<dbReference type="HOGENOM" id="CLU_000288_63_1_1"/>
<dbReference type="InParanoid" id="Q8BHI9"/>
<dbReference type="OMA" id="IMSNEWM"/>
<dbReference type="OrthoDB" id="193931at2759"/>
<dbReference type="PhylomeDB" id="Q8BHI9"/>
<dbReference type="TreeFam" id="TF320558"/>
<dbReference type="BioGRID-ORCS" id="245269">
    <property type="hits" value="1 hit in 76 CRISPR screens"/>
</dbReference>
<dbReference type="PRO" id="PR:Q8BHI9"/>
<dbReference type="Proteomes" id="UP000000589">
    <property type="component" value="Chromosome 13"/>
</dbReference>
<dbReference type="RNAct" id="Q8BHI9">
    <property type="molecule type" value="protein"/>
</dbReference>
<dbReference type="Bgee" id="ENSMUSG00000095930">
    <property type="expression patterns" value="Expressed in retinal neural layer and 120 other cell types or tissues"/>
</dbReference>
<dbReference type="GO" id="GO:0005524">
    <property type="term" value="F:ATP binding"/>
    <property type="evidence" value="ECO:0000250"/>
    <property type="project" value="UniProtKB"/>
</dbReference>
<dbReference type="GO" id="GO:0000287">
    <property type="term" value="F:magnesium ion binding"/>
    <property type="evidence" value="ECO:0000250"/>
    <property type="project" value="UniProtKB"/>
</dbReference>
<dbReference type="GO" id="GO:0106310">
    <property type="term" value="F:protein serine kinase activity"/>
    <property type="evidence" value="ECO:0007669"/>
    <property type="project" value="RHEA"/>
</dbReference>
<dbReference type="GO" id="GO:0004674">
    <property type="term" value="F:protein serine/threonine kinase activity"/>
    <property type="evidence" value="ECO:0000250"/>
    <property type="project" value="UniProtKB"/>
</dbReference>
<dbReference type="GO" id="GO:0006468">
    <property type="term" value="P:protein phosphorylation"/>
    <property type="evidence" value="ECO:0000250"/>
    <property type="project" value="UniProtKB"/>
</dbReference>
<dbReference type="CDD" id="cd14075">
    <property type="entry name" value="STKc_NIM1"/>
    <property type="match status" value="1"/>
</dbReference>
<dbReference type="FunFam" id="3.30.200.20:FF:000003">
    <property type="entry name" value="Non-specific serine/threonine protein kinase"/>
    <property type="match status" value="1"/>
</dbReference>
<dbReference type="FunFam" id="1.10.510.10:FF:000346">
    <property type="entry name" value="Serine/threonine-protein kinase NIM1"/>
    <property type="match status" value="1"/>
</dbReference>
<dbReference type="Gene3D" id="1.10.510.10">
    <property type="entry name" value="Transferase(Phosphotransferase) domain 1"/>
    <property type="match status" value="1"/>
</dbReference>
<dbReference type="InterPro" id="IPR011009">
    <property type="entry name" value="Kinase-like_dom_sf"/>
</dbReference>
<dbReference type="InterPro" id="IPR049571">
    <property type="entry name" value="NIM1K_STKc"/>
</dbReference>
<dbReference type="InterPro" id="IPR000719">
    <property type="entry name" value="Prot_kinase_dom"/>
</dbReference>
<dbReference type="InterPro" id="IPR017441">
    <property type="entry name" value="Protein_kinase_ATP_BS"/>
</dbReference>
<dbReference type="InterPro" id="IPR008271">
    <property type="entry name" value="Ser/Thr_kinase_AS"/>
</dbReference>
<dbReference type="PANTHER" id="PTHR24346">
    <property type="entry name" value="MAP/MICROTUBULE AFFINITY-REGULATING KINASE"/>
    <property type="match status" value="1"/>
</dbReference>
<dbReference type="PANTHER" id="PTHR24346:SF49">
    <property type="entry name" value="NIM1 SERINE_THREONINE PROTEIN KINASE"/>
    <property type="match status" value="1"/>
</dbReference>
<dbReference type="Pfam" id="PF00069">
    <property type="entry name" value="Pkinase"/>
    <property type="match status" value="1"/>
</dbReference>
<dbReference type="SMART" id="SM00220">
    <property type="entry name" value="S_TKc"/>
    <property type="match status" value="1"/>
</dbReference>
<dbReference type="SUPFAM" id="SSF56112">
    <property type="entry name" value="Protein kinase-like (PK-like)"/>
    <property type="match status" value="1"/>
</dbReference>
<dbReference type="PROSITE" id="PS00107">
    <property type="entry name" value="PROTEIN_KINASE_ATP"/>
    <property type="match status" value="1"/>
</dbReference>
<dbReference type="PROSITE" id="PS50011">
    <property type="entry name" value="PROTEIN_KINASE_DOM"/>
    <property type="match status" value="1"/>
</dbReference>
<dbReference type="PROSITE" id="PS00108">
    <property type="entry name" value="PROTEIN_KINASE_ST"/>
    <property type="match status" value="1"/>
</dbReference>
<organism>
    <name type="scientific">Mus musculus</name>
    <name type="common">Mouse</name>
    <dbReference type="NCBI Taxonomy" id="10090"/>
    <lineage>
        <taxon>Eukaryota</taxon>
        <taxon>Metazoa</taxon>
        <taxon>Chordata</taxon>
        <taxon>Craniata</taxon>
        <taxon>Vertebrata</taxon>
        <taxon>Euteleostomi</taxon>
        <taxon>Mammalia</taxon>
        <taxon>Eutheria</taxon>
        <taxon>Euarchontoglires</taxon>
        <taxon>Glires</taxon>
        <taxon>Rodentia</taxon>
        <taxon>Myomorpha</taxon>
        <taxon>Muroidea</taxon>
        <taxon>Muridae</taxon>
        <taxon>Murinae</taxon>
        <taxon>Mus</taxon>
        <taxon>Mus</taxon>
    </lineage>
</organism>
<sequence length="436" mass="49777">MTAVFVNGGGLVNTHCDRWERRDSVESSCQTEGGKDSEEDQQRQLTPFEKLTQDMCQDEKVVREITLGKRIGFYRIRGEIGSGNFSQVKLGIHSLTKEKVAIKILDKTKLDQKTQRLLSREISSMEKLHHPNIVRLYEVVETLSKLHLVMEYAGGGELFGKISTEGKLSEPESKLIFSQILSAVKHMHENQIIHRDLKAENVFYTSRTCVKVGDFGFSTVSKKGEMLNTFCGSPPYAAPELFRDQHYVGVYVDIWALGVLLYFMVTGTMPFRAETVAKLKKSILEGTYTIPQHVSEPCHRLIRGVLQPTPTERYGINYIMSNEWMRGVPYPTPLEPFQLDPKHLSETSTLKEEENEVKSTLEHLGITDEHIRNNQGRDARSSITGVYRIILHRVQRRKALESVPIMILPEPKERDLKKGSRIYRGIRHTSKFCSIL</sequence>